<gene>
    <name evidence="1" type="primary">prs</name>
    <name type="synonym">prsA</name>
    <name type="ordered locus">PYRAB17000</name>
    <name type="ORF">PAB1114</name>
</gene>
<accession>Q9UY08</accession>
<accession>G8ZK63</accession>
<feature type="chain" id="PRO_0000141242" description="Ribose-phosphate pyrophosphokinase">
    <location>
        <begin position="1"/>
        <end position="285"/>
    </location>
</feature>
<feature type="active site" evidence="1">
    <location>
        <position position="185"/>
    </location>
</feature>
<feature type="binding site" evidence="1">
    <location>
        <begin position="34"/>
        <end position="36"/>
    </location>
    <ligand>
        <name>ATP</name>
        <dbReference type="ChEBI" id="CHEBI:30616"/>
    </ligand>
</feature>
<feature type="binding site" evidence="1">
    <location>
        <begin position="91"/>
        <end position="92"/>
    </location>
    <ligand>
        <name>ATP</name>
        <dbReference type="ChEBI" id="CHEBI:30616"/>
    </ligand>
</feature>
<feature type="binding site" evidence="1">
    <location>
        <position position="124"/>
    </location>
    <ligand>
        <name>Mg(2+)</name>
        <dbReference type="ChEBI" id="CHEBI:18420"/>
        <label>1</label>
    </ligand>
</feature>
<feature type="binding site" evidence="1">
    <location>
        <position position="162"/>
    </location>
    <ligand>
        <name>Mg(2+)</name>
        <dbReference type="ChEBI" id="CHEBI:18420"/>
        <label>2</label>
    </ligand>
</feature>
<feature type="binding site" evidence="1">
    <location>
        <position position="187"/>
    </location>
    <ligand>
        <name>D-ribose 5-phosphate</name>
        <dbReference type="ChEBI" id="CHEBI:78346"/>
    </ligand>
</feature>
<feature type="binding site" evidence="1">
    <location>
        <position position="211"/>
    </location>
    <ligand>
        <name>D-ribose 5-phosphate</name>
        <dbReference type="ChEBI" id="CHEBI:78346"/>
    </ligand>
</feature>
<feature type="binding site" evidence="1">
    <location>
        <begin position="215"/>
        <end position="219"/>
    </location>
    <ligand>
        <name>D-ribose 5-phosphate</name>
        <dbReference type="ChEBI" id="CHEBI:78346"/>
    </ligand>
</feature>
<protein>
    <recommendedName>
        <fullName evidence="1">Ribose-phosphate pyrophosphokinase</fullName>
        <shortName evidence="1">RPPK</shortName>
        <ecNumber evidence="1">2.7.6.1</ecNumber>
    </recommendedName>
    <alternativeName>
        <fullName evidence="1">5-phospho-D-ribosyl alpha-1-diphosphate synthase</fullName>
    </alternativeName>
    <alternativeName>
        <fullName evidence="1">Phosphoribosyl diphosphate synthase</fullName>
    </alternativeName>
    <alternativeName>
        <fullName evidence="1">Phosphoribosyl pyrophosphate synthase</fullName>
        <shortName evidence="1">P-Rib-PP synthase</shortName>
        <shortName evidence="1">PRPP synthase</shortName>
        <shortName evidence="1">PRPPase</shortName>
    </alternativeName>
</protein>
<reference key="1">
    <citation type="journal article" date="2003" name="Mol. Microbiol.">
        <title>An integrated analysis of the genome of the hyperthermophilic archaeon Pyrococcus abyssi.</title>
        <authorList>
            <person name="Cohen G.N."/>
            <person name="Barbe V."/>
            <person name="Flament D."/>
            <person name="Galperin M."/>
            <person name="Heilig R."/>
            <person name="Lecompte O."/>
            <person name="Poch O."/>
            <person name="Prieur D."/>
            <person name="Querellou J."/>
            <person name="Ripp R."/>
            <person name="Thierry J.-C."/>
            <person name="Van der Oost J."/>
            <person name="Weissenbach J."/>
            <person name="Zivanovic Y."/>
            <person name="Forterre P."/>
        </authorList>
    </citation>
    <scope>NUCLEOTIDE SEQUENCE [LARGE SCALE GENOMIC DNA]</scope>
    <source>
        <strain>GE5 / Orsay</strain>
    </source>
</reference>
<reference key="2">
    <citation type="journal article" date="2012" name="Curr. Microbiol.">
        <title>Re-annotation of two hyperthermophilic archaea Pyrococcus abyssi GE5 and Pyrococcus furiosus DSM 3638.</title>
        <authorList>
            <person name="Gao J."/>
            <person name="Wang J."/>
        </authorList>
    </citation>
    <scope>GENOME REANNOTATION</scope>
    <source>
        <strain>GE5 / Orsay</strain>
    </source>
</reference>
<dbReference type="EC" id="2.7.6.1" evidence="1"/>
<dbReference type="EMBL" id="AJ248288">
    <property type="protein sequence ID" value="CAB50604.1"/>
    <property type="status" value="ALT_INIT"/>
    <property type="molecule type" value="Genomic_DNA"/>
</dbReference>
<dbReference type="EMBL" id="HE613800">
    <property type="protein sequence ID" value="CCE71170.1"/>
    <property type="molecule type" value="Genomic_DNA"/>
</dbReference>
<dbReference type="PIR" id="F75020">
    <property type="entry name" value="F75020"/>
</dbReference>
<dbReference type="RefSeq" id="WP_010868818.1">
    <property type="nucleotide sequence ID" value="NC_000868.1"/>
</dbReference>
<dbReference type="SMR" id="Q9UY08"/>
<dbReference type="STRING" id="272844.PAB1114"/>
<dbReference type="KEGG" id="pab:PAB1114"/>
<dbReference type="PATRIC" id="fig|272844.11.peg.1816"/>
<dbReference type="eggNOG" id="arCOG00067">
    <property type="taxonomic scope" value="Archaea"/>
</dbReference>
<dbReference type="HOGENOM" id="CLU_033546_2_2_2"/>
<dbReference type="OrthoDB" id="371997at2157"/>
<dbReference type="UniPathway" id="UPA00087">
    <property type="reaction ID" value="UER00172"/>
</dbReference>
<dbReference type="Proteomes" id="UP000000810">
    <property type="component" value="Chromosome"/>
</dbReference>
<dbReference type="Proteomes" id="UP000009139">
    <property type="component" value="Chromosome"/>
</dbReference>
<dbReference type="GO" id="GO:0005737">
    <property type="term" value="C:cytoplasm"/>
    <property type="evidence" value="ECO:0007669"/>
    <property type="project" value="UniProtKB-SubCell"/>
</dbReference>
<dbReference type="GO" id="GO:0002189">
    <property type="term" value="C:ribose phosphate diphosphokinase complex"/>
    <property type="evidence" value="ECO:0007669"/>
    <property type="project" value="TreeGrafter"/>
</dbReference>
<dbReference type="GO" id="GO:0005524">
    <property type="term" value="F:ATP binding"/>
    <property type="evidence" value="ECO:0007669"/>
    <property type="project" value="UniProtKB-KW"/>
</dbReference>
<dbReference type="GO" id="GO:0016301">
    <property type="term" value="F:kinase activity"/>
    <property type="evidence" value="ECO:0007669"/>
    <property type="project" value="UniProtKB-KW"/>
</dbReference>
<dbReference type="GO" id="GO:0000287">
    <property type="term" value="F:magnesium ion binding"/>
    <property type="evidence" value="ECO:0007669"/>
    <property type="project" value="UniProtKB-UniRule"/>
</dbReference>
<dbReference type="GO" id="GO:0004749">
    <property type="term" value="F:ribose phosphate diphosphokinase activity"/>
    <property type="evidence" value="ECO:0007669"/>
    <property type="project" value="UniProtKB-UniRule"/>
</dbReference>
<dbReference type="GO" id="GO:0006015">
    <property type="term" value="P:5-phosphoribose 1-diphosphate biosynthetic process"/>
    <property type="evidence" value="ECO:0007669"/>
    <property type="project" value="UniProtKB-UniRule"/>
</dbReference>
<dbReference type="GO" id="GO:0006164">
    <property type="term" value="P:purine nucleotide biosynthetic process"/>
    <property type="evidence" value="ECO:0007669"/>
    <property type="project" value="TreeGrafter"/>
</dbReference>
<dbReference type="CDD" id="cd06223">
    <property type="entry name" value="PRTases_typeI"/>
    <property type="match status" value="1"/>
</dbReference>
<dbReference type="FunFam" id="3.40.50.2020:FF:000074">
    <property type="entry name" value="Ribose-phosphate pyrophosphokinase"/>
    <property type="match status" value="1"/>
</dbReference>
<dbReference type="Gene3D" id="3.40.50.2020">
    <property type="match status" value="2"/>
</dbReference>
<dbReference type="HAMAP" id="MF_00583_A">
    <property type="entry name" value="RibP_PPkinase_A"/>
    <property type="match status" value="1"/>
</dbReference>
<dbReference type="InterPro" id="IPR029099">
    <property type="entry name" value="Pribosyltran_N"/>
</dbReference>
<dbReference type="InterPro" id="IPR000836">
    <property type="entry name" value="PRibTrfase_dom"/>
</dbReference>
<dbReference type="InterPro" id="IPR029057">
    <property type="entry name" value="PRTase-like"/>
</dbReference>
<dbReference type="InterPro" id="IPR005946">
    <property type="entry name" value="Rib-P_diPkinase"/>
</dbReference>
<dbReference type="InterPro" id="IPR037514">
    <property type="entry name" value="Rib-P_diPkinase_arc"/>
</dbReference>
<dbReference type="NCBIfam" id="NF002095">
    <property type="entry name" value="PRK00934.1"/>
    <property type="match status" value="1"/>
</dbReference>
<dbReference type="NCBIfam" id="TIGR01251">
    <property type="entry name" value="ribP_PPkin"/>
    <property type="match status" value="1"/>
</dbReference>
<dbReference type="PANTHER" id="PTHR10210">
    <property type="entry name" value="RIBOSE-PHOSPHATE DIPHOSPHOKINASE FAMILY MEMBER"/>
    <property type="match status" value="1"/>
</dbReference>
<dbReference type="PANTHER" id="PTHR10210:SF32">
    <property type="entry name" value="RIBOSE-PHOSPHATE PYROPHOSPHOKINASE 2"/>
    <property type="match status" value="1"/>
</dbReference>
<dbReference type="Pfam" id="PF14572">
    <property type="entry name" value="Pribosyl_synth"/>
    <property type="match status" value="1"/>
</dbReference>
<dbReference type="Pfam" id="PF13793">
    <property type="entry name" value="Pribosyltran_N"/>
    <property type="match status" value="1"/>
</dbReference>
<dbReference type="SMART" id="SM01400">
    <property type="entry name" value="Pribosyltran_N"/>
    <property type="match status" value="1"/>
</dbReference>
<dbReference type="SUPFAM" id="SSF53271">
    <property type="entry name" value="PRTase-like"/>
    <property type="match status" value="1"/>
</dbReference>
<organism>
    <name type="scientific">Pyrococcus abyssi (strain GE5 / Orsay)</name>
    <dbReference type="NCBI Taxonomy" id="272844"/>
    <lineage>
        <taxon>Archaea</taxon>
        <taxon>Methanobacteriati</taxon>
        <taxon>Methanobacteriota</taxon>
        <taxon>Thermococci</taxon>
        <taxon>Thermococcales</taxon>
        <taxon>Thermococcaceae</taxon>
        <taxon>Pyrococcus</taxon>
    </lineage>
</organism>
<proteinExistence type="inferred from homology"/>
<keyword id="KW-0067">ATP-binding</keyword>
<keyword id="KW-0963">Cytoplasm</keyword>
<keyword id="KW-0418">Kinase</keyword>
<keyword id="KW-0460">Magnesium</keyword>
<keyword id="KW-0479">Metal-binding</keyword>
<keyword id="KW-0545">Nucleotide biosynthesis</keyword>
<keyword id="KW-0547">Nucleotide-binding</keyword>
<keyword id="KW-0808">Transferase</keyword>
<sequence length="285" mass="31714">MKVLFVIGSGAKHLEEEISRHGNLINVEIKKFPDGEKYVRVLERGKEAIVIQSTYHPQDENLIEALLLGDALSEAGFKKLKIVIPYLAYSRQDRVTKEGEPISVRAIMKMLGLYYDELYVFDIHNPKTLEHFPGIAKNIYPAEAIANYFKDKLGEGLILAPDKGALERAKRVAEVLGLEYSHFEKERISPTEVRMKPVDVDVNGKNVLIVDDIISTGGTMIKAANILRELGAKEIFVVATHGVFAEGAIERVSKAVNELAVTNTIPTEVSKISIVDYIVKLGEKE</sequence>
<comment type="function">
    <text evidence="1">Involved in the biosynthesis of the central metabolite phospho-alpha-D-ribosyl-1-pyrophosphate (PRPP) via the transfer of pyrophosphoryl group from ATP to 1-hydroxyl of ribose-5-phosphate (Rib-5-P).</text>
</comment>
<comment type="catalytic activity">
    <reaction evidence="1">
        <text>D-ribose 5-phosphate + ATP = 5-phospho-alpha-D-ribose 1-diphosphate + AMP + H(+)</text>
        <dbReference type="Rhea" id="RHEA:15609"/>
        <dbReference type="ChEBI" id="CHEBI:15378"/>
        <dbReference type="ChEBI" id="CHEBI:30616"/>
        <dbReference type="ChEBI" id="CHEBI:58017"/>
        <dbReference type="ChEBI" id="CHEBI:78346"/>
        <dbReference type="ChEBI" id="CHEBI:456215"/>
        <dbReference type="EC" id="2.7.6.1"/>
    </reaction>
</comment>
<comment type="cofactor">
    <cofactor evidence="1">
        <name>Mg(2+)</name>
        <dbReference type="ChEBI" id="CHEBI:18420"/>
    </cofactor>
    <text evidence="1">Binds 2 Mg(2+) ions per subunit.</text>
</comment>
<comment type="pathway">
    <text evidence="1">Metabolic intermediate biosynthesis; 5-phospho-alpha-D-ribose 1-diphosphate biosynthesis; 5-phospho-alpha-D-ribose 1-diphosphate from D-ribose 5-phosphate (route I): step 1/1.</text>
</comment>
<comment type="subcellular location">
    <subcellularLocation>
        <location evidence="1">Cytoplasm</location>
    </subcellularLocation>
</comment>
<comment type="similarity">
    <text evidence="1">Belongs to the ribose-phosphate pyrophosphokinase family. Class III (archaeal) subfamily.</text>
</comment>
<comment type="sequence caution" evidence="2">
    <conflict type="erroneous initiation">
        <sequence resource="EMBL-CDS" id="CAB50604"/>
    </conflict>
    <text>Truncated N-terminus.</text>
</comment>
<evidence type="ECO:0000255" key="1">
    <source>
        <dbReference type="HAMAP-Rule" id="MF_00583"/>
    </source>
</evidence>
<evidence type="ECO:0000305" key="2"/>
<name>KPRS_PYRAB</name>